<accession>Q6NHG5</accession>
<organism>
    <name type="scientific">Corynebacterium diphtheriae (strain ATCC 700971 / NCTC 13129 / Biotype gravis)</name>
    <dbReference type="NCBI Taxonomy" id="257309"/>
    <lineage>
        <taxon>Bacteria</taxon>
        <taxon>Bacillati</taxon>
        <taxon>Actinomycetota</taxon>
        <taxon>Actinomycetes</taxon>
        <taxon>Mycobacteriales</taxon>
        <taxon>Corynebacteriaceae</taxon>
        <taxon>Corynebacterium</taxon>
    </lineage>
</organism>
<dbReference type="EMBL" id="BX248357">
    <property type="protein sequence ID" value="CAE49692.1"/>
    <property type="molecule type" value="Genomic_DNA"/>
</dbReference>
<dbReference type="RefSeq" id="WP_003851324.1">
    <property type="nucleotide sequence ID" value="NC_002935.2"/>
</dbReference>
<dbReference type="SMR" id="Q6NHG5"/>
<dbReference type="STRING" id="257309.DIP1172"/>
<dbReference type="KEGG" id="cdi:DIP1172"/>
<dbReference type="HOGENOM" id="CLU_097103_1_1_11"/>
<dbReference type="UniPathway" id="UPA00068"/>
<dbReference type="Proteomes" id="UP000002198">
    <property type="component" value="Chromosome"/>
</dbReference>
<dbReference type="GO" id="GO:0005737">
    <property type="term" value="C:cytoplasm"/>
    <property type="evidence" value="ECO:0007669"/>
    <property type="project" value="UniProtKB-SubCell"/>
</dbReference>
<dbReference type="GO" id="GO:0034618">
    <property type="term" value="F:arginine binding"/>
    <property type="evidence" value="ECO:0007669"/>
    <property type="project" value="InterPro"/>
</dbReference>
<dbReference type="GO" id="GO:0003677">
    <property type="term" value="F:DNA binding"/>
    <property type="evidence" value="ECO:0007669"/>
    <property type="project" value="UniProtKB-KW"/>
</dbReference>
<dbReference type="GO" id="GO:0003700">
    <property type="term" value="F:DNA-binding transcription factor activity"/>
    <property type="evidence" value="ECO:0007669"/>
    <property type="project" value="UniProtKB-UniRule"/>
</dbReference>
<dbReference type="GO" id="GO:0006526">
    <property type="term" value="P:L-arginine biosynthetic process"/>
    <property type="evidence" value="ECO:0007669"/>
    <property type="project" value="UniProtKB-UniPathway"/>
</dbReference>
<dbReference type="GO" id="GO:0051259">
    <property type="term" value="P:protein complex oligomerization"/>
    <property type="evidence" value="ECO:0007669"/>
    <property type="project" value="InterPro"/>
</dbReference>
<dbReference type="GO" id="GO:1900079">
    <property type="term" value="P:regulation of arginine biosynthetic process"/>
    <property type="evidence" value="ECO:0007669"/>
    <property type="project" value="UniProtKB-UniRule"/>
</dbReference>
<dbReference type="Gene3D" id="3.30.1360.40">
    <property type="match status" value="1"/>
</dbReference>
<dbReference type="Gene3D" id="1.10.10.10">
    <property type="entry name" value="Winged helix-like DNA-binding domain superfamily/Winged helix DNA-binding domain"/>
    <property type="match status" value="1"/>
</dbReference>
<dbReference type="HAMAP" id="MF_00173">
    <property type="entry name" value="Arg_repressor"/>
    <property type="match status" value="1"/>
</dbReference>
<dbReference type="InterPro" id="IPR001669">
    <property type="entry name" value="Arg_repress"/>
</dbReference>
<dbReference type="InterPro" id="IPR020899">
    <property type="entry name" value="Arg_repress_C"/>
</dbReference>
<dbReference type="InterPro" id="IPR036251">
    <property type="entry name" value="Arg_repress_C_sf"/>
</dbReference>
<dbReference type="InterPro" id="IPR020900">
    <property type="entry name" value="Arg_repress_DNA-bd"/>
</dbReference>
<dbReference type="InterPro" id="IPR036388">
    <property type="entry name" value="WH-like_DNA-bd_sf"/>
</dbReference>
<dbReference type="InterPro" id="IPR036390">
    <property type="entry name" value="WH_DNA-bd_sf"/>
</dbReference>
<dbReference type="NCBIfam" id="TIGR01529">
    <property type="entry name" value="argR_whole"/>
    <property type="match status" value="1"/>
</dbReference>
<dbReference type="NCBIfam" id="NF002880">
    <property type="entry name" value="PRK03341.1"/>
    <property type="match status" value="1"/>
</dbReference>
<dbReference type="PANTHER" id="PTHR34471">
    <property type="entry name" value="ARGININE REPRESSOR"/>
    <property type="match status" value="1"/>
</dbReference>
<dbReference type="PANTHER" id="PTHR34471:SF1">
    <property type="entry name" value="ARGININE REPRESSOR"/>
    <property type="match status" value="1"/>
</dbReference>
<dbReference type="Pfam" id="PF01316">
    <property type="entry name" value="Arg_repressor"/>
    <property type="match status" value="1"/>
</dbReference>
<dbReference type="Pfam" id="PF02863">
    <property type="entry name" value="Arg_repressor_C"/>
    <property type="match status" value="1"/>
</dbReference>
<dbReference type="PRINTS" id="PR01467">
    <property type="entry name" value="ARGREPRESSOR"/>
</dbReference>
<dbReference type="SUPFAM" id="SSF55252">
    <property type="entry name" value="C-terminal domain of arginine repressor"/>
    <property type="match status" value="1"/>
</dbReference>
<dbReference type="SUPFAM" id="SSF46785">
    <property type="entry name" value="Winged helix' DNA-binding domain"/>
    <property type="match status" value="1"/>
</dbReference>
<feature type="chain" id="PRO_0000205082" description="Arginine repressor">
    <location>
        <begin position="1"/>
        <end position="163"/>
    </location>
</feature>
<sequence>MSNGPITRTVRQALILDLLEQNQVSSQMQLSELLKQRGVDITQGTLSRDLDELGAKKIRPNGGRAFYAVGTSEDAASSTTAGTREKLRKMLDDLLVSVDHSGNIAVLRTPPAGAPFLASFIDRVGMDEVVGTIAGDDTVFVLARDPMTGKELGEFLSQRRTSL</sequence>
<name>ARGR_CORDI</name>
<protein>
    <recommendedName>
        <fullName evidence="1">Arginine repressor</fullName>
    </recommendedName>
</protein>
<evidence type="ECO:0000255" key="1">
    <source>
        <dbReference type="HAMAP-Rule" id="MF_00173"/>
    </source>
</evidence>
<comment type="function">
    <text evidence="1">Regulates arginine biosynthesis genes.</text>
</comment>
<comment type="pathway">
    <text>Amino-acid biosynthesis; L-arginine biosynthesis [regulation].</text>
</comment>
<comment type="subcellular location">
    <subcellularLocation>
        <location evidence="1">Cytoplasm</location>
    </subcellularLocation>
</comment>
<comment type="similarity">
    <text evidence="1">Belongs to the ArgR family.</text>
</comment>
<reference key="1">
    <citation type="journal article" date="2003" name="Nucleic Acids Res.">
        <title>The complete genome sequence and analysis of Corynebacterium diphtheriae NCTC13129.</title>
        <authorList>
            <person name="Cerdeno-Tarraga A.-M."/>
            <person name="Efstratiou A."/>
            <person name="Dover L.G."/>
            <person name="Holden M.T.G."/>
            <person name="Pallen M.J."/>
            <person name="Bentley S.D."/>
            <person name="Besra G.S."/>
            <person name="Churcher C.M."/>
            <person name="James K.D."/>
            <person name="De Zoysa A."/>
            <person name="Chillingworth T."/>
            <person name="Cronin A."/>
            <person name="Dowd L."/>
            <person name="Feltwell T."/>
            <person name="Hamlin N."/>
            <person name="Holroyd S."/>
            <person name="Jagels K."/>
            <person name="Moule S."/>
            <person name="Quail M.A."/>
            <person name="Rabbinowitsch E."/>
            <person name="Rutherford K.M."/>
            <person name="Thomson N.R."/>
            <person name="Unwin L."/>
            <person name="Whitehead S."/>
            <person name="Barrell B.G."/>
            <person name="Parkhill J."/>
        </authorList>
    </citation>
    <scope>NUCLEOTIDE SEQUENCE [LARGE SCALE GENOMIC DNA]</scope>
    <source>
        <strain>ATCC 700971 / NCTC 13129 / Biotype gravis</strain>
    </source>
</reference>
<gene>
    <name evidence="1" type="primary">argR</name>
    <name type="ordered locus">DIP1172</name>
</gene>
<keyword id="KW-0028">Amino-acid biosynthesis</keyword>
<keyword id="KW-0055">Arginine biosynthesis</keyword>
<keyword id="KW-0963">Cytoplasm</keyword>
<keyword id="KW-0238">DNA-binding</keyword>
<keyword id="KW-1185">Reference proteome</keyword>
<keyword id="KW-0678">Repressor</keyword>
<keyword id="KW-0804">Transcription</keyword>
<keyword id="KW-0805">Transcription regulation</keyword>
<proteinExistence type="inferred from homology"/>